<comment type="function">
    <text evidence="1">Tetrapolymerization of the monopyrrole PBG into the hydroxymethylbilane pre-uroporphyrinogen in several discrete steps.</text>
</comment>
<comment type="catalytic activity">
    <reaction evidence="1">
        <text>4 porphobilinogen + H2O = hydroxymethylbilane + 4 NH4(+)</text>
        <dbReference type="Rhea" id="RHEA:13185"/>
        <dbReference type="ChEBI" id="CHEBI:15377"/>
        <dbReference type="ChEBI" id="CHEBI:28938"/>
        <dbReference type="ChEBI" id="CHEBI:57845"/>
        <dbReference type="ChEBI" id="CHEBI:58126"/>
        <dbReference type="EC" id="2.5.1.61"/>
    </reaction>
</comment>
<comment type="cofactor">
    <cofactor evidence="1">
        <name>dipyrromethane</name>
        <dbReference type="ChEBI" id="CHEBI:60342"/>
    </cofactor>
    <text evidence="1">Binds 1 dipyrromethane group covalently.</text>
</comment>
<comment type="pathway">
    <text evidence="1">Porphyrin-containing compound metabolism; protoporphyrin-IX biosynthesis; coproporphyrinogen-III from 5-aminolevulinate: step 2/4.</text>
</comment>
<comment type="subunit">
    <text evidence="1">Monomer.</text>
</comment>
<comment type="miscellaneous">
    <text evidence="1">The porphobilinogen subunits are added to the dipyrromethane group.</text>
</comment>
<comment type="similarity">
    <text evidence="1">Belongs to the HMBS family.</text>
</comment>
<keyword id="KW-0627">Porphyrin biosynthesis</keyword>
<keyword id="KW-0808">Transferase</keyword>
<reference key="1">
    <citation type="submission" date="2008-12" db="EMBL/GenBank/DDBJ databases">
        <title>Complete sequence of chromosome of Shewanella baltica OS223.</title>
        <authorList>
            <consortium name="US DOE Joint Genome Institute"/>
            <person name="Lucas S."/>
            <person name="Copeland A."/>
            <person name="Lapidus A."/>
            <person name="Glavina del Rio T."/>
            <person name="Dalin E."/>
            <person name="Tice H."/>
            <person name="Bruce D."/>
            <person name="Goodwin L."/>
            <person name="Pitluck S."/>
            <person name="Chertkov O."/>
            <person name="Meincke L."/>
            <person name="Brettin T."/>
            <person name="Detter J.C."/>
            <person name="Han C."/>
            <person name="Kuske C.R."/>
            <person name="Larimer F."/>
            <person name="Land M."/>
            <person name="Hauser L."/>
            <person name="Kyrpides N."/>
            <person name="Ovchinnikova G."/>
            <person name="Brettar I."/>
            <person name="Rodrigues J."/>
            <person name="Konstantinidis K."/>
            <person name="Tiedje J."/>
        </authorList>
    </citation>
    <scope>NUCLEOTIDE SEQUENCE [LARGE SCALE GENOMIC DNA]</scope>
    <source>
        <strain>OS223</strain>
    </source>
</reference>
<dbReference type="EC" id="2.5.1.61" evidence="1"/>
<dbReference type="EMBL" id="CP001252">
    <property type="protein sequence ID" value="ACK48376.1"/>
    <property type="molecule type" value="Genomic_DNA"/>
</dbReference>
<dbReference type="RefSeq" id="WP_006083428.1">
    <property type="nucleotide sequence ID" value="NC_011663.1"/>
</dbReference>
<dbReference type="SMR" id="B8E879"/>
<dbReference type="KEGG" id="sbp:Sbal223_3901"/>
<dbReference type="HOGENOM" id="CLU_019704_0_2_6"/>
<dbReference type="UniPathway" id="UPA00251">
    <property type="reaction ID" value="UER00319"/>
</dbReference>
<dbReference type="Proteomes" id="UP000002507">
    <property type="component" value="Chromosome"/>
</dbReference>
<dbReference type="GO" id="GO:0005737">
    <property type="term" value="C:cytoplasm"/>
    <property type="evidence" value="ECO:0007669"/>
    <property type="project" value="TreeGrafter"/>
</dbReference>
<dbReference type="GO" id="GO:0004418">
    <property type="term" value="F:hydroxymethylbilane synthase activity"/>
    <property type="evidence" value="ECO:0007669"/>
    <property type="project" value="UniProtKB-UniRule"/>
</dbReference>
<dbReference type="GO" id="GO:0006782">
    <property type="term" value="P:protoporphyrinogen IX biosynthetic process"/>
    <property type="evidence" value="ECO:0007669"/>
    <property type="project" value="UniProtKB-UniRule"/>
</dbReference>
<dbReference type="CDD" id="cd13646">
    <property type="entry name" value="PBP2_EcHMBS_like"/>
    <property type="match status" value="1"/>
</dbReference>
<dbReference type="FunFam" id="3.30.160.40:FF:000002">
    <property type="entry name" value="Porphobilinogen deaminase"/>
    <property type="match status" value="1"/>
</dbReference>
<dbReference type="FunFam" id="3.40.190.10:FF:000004">
    <property type="entry name" value="Porphobilinogen deaminase"/>
    <property type="match status" value="1"/>
</dbReference>
<dbReference type="FunFam" id="3.40.190.10:FF:000005">
    <property type="entry name" value="Porphobilinogen deaminase"/>
    <property type="match status" value="1"/>
</dbReference>
<dbReference type="Gene3D" id="3.40.190.10">
    <property type="entry name" value="Periplasmic binding protein-like II"/>
    <property type="match status" value="2"/>
</dbReference>
<dbReference type="Gene3D" id="3.30.160.40">
    <property type="entry name" value="Porphobilinogen deaminase, C-terminal domain"/>
    <property type="match status" value="1"/>
</dbReference>
<dbReference type="HAMAP" id="MF_00260">
    <property type="entry name" value="Porphobil_deam"/>
    <property type="match status" value="1"/>
</dbReference>
<dbReference type="InterPro" id="IPR000860">
    <property type="entry name" value="HemC"/>
</dbReference>
<dbReference type="InterPro" id="IPR022419">
    <property type="entry name" value="Porphobilin_deaminase_cofac_BS"/>
</dbReference>
<dbReference type="InterPro" id="IPR022417">
    <property type="entry name" value="Porphobilin_deaminase_N"/>
</dbReference>
<dbReference type="InterPro" id="IPR022418">
    <property type="entry name" value="Porphobilinogen_deaminase_C"/>
</dbReference>
<dbReference type="InterPro" id="IPR036803">
    <property type="entry name" value="Porphobilinogen_deaminase_C_sf"/>
</dbReference>
<dbReference type="NCBIfam" id="TIGR00212">
    <property type="entry name" value="hemC"/>
    <property type="match status" value="1"/>
</dbReference>
<dbReference type="PANTHER" id="PTHR11557">
    <property type="entry name" value="PORPHOBILINOGEN DEAMINASE"/>
    <property type="match status" value="1"/>
</dbReference>
<dbReference type="PANTHER" id="PTHR11557:SF0">
    <property type="entry name" value="PORPHOBILINOGEN DEAMINASE"/>
    <property type="match status" value="1"/>
</dbReference>
<dbReference type="Pfam" id="PF01379">
    <property type="entry name" value="Porphobil_deam"/>
    <property type="match status" value="1"/>
</dbReference>
<dbReference type="Pfam" id="PF03900">
    <property type="entry name" value="Porphobil_deamC"/>
    <property type="match status" value="1"/>
</dbReference>
<dbReference type="PIRSF" id="PIRSF001438">
    <property type="entry name" value="4pyrrol_synth_OHMeBilane_synth"/>
    <property type="match status" value="1"/>
</dbReference>
<dbReference type="PRINTS" id="PR00151">
    <property type="entry name" value="PORPHBDMNASE"/>
</dbReference>
<dbReference type="SUPFAM" id="SSF53850">
    <property type="entry name" value="Periplasmic binding protein-like II"/>
    <property type="match status" value="1"/>
</dbReference>
<dbReference type="SUPFAM" id="SSF54782">
    <property type="entry name" value="Porphobilinogen deaminase (hydroxymethylbilane synthase), C-terminal domain"/>
    <property type="match status" value="1"/>
</dbReference>
<dbReference type="PROSITE" id="PS00533">
    <property type="entry name" value="PORPHOBILINOGEN_DEAM"/>
    <property type="match status" value="1"/>
</dbReference>
<name>HEM3_SHEB2</name>
<accession>B8E879</accession>
<sequence length="310" mass="33447">MSENRIRIATRKSPLAMWQAEFVKAELERIHPGIVVELLPMSTKGDVILDTPLAKVGGKGLFVKELEVAMLDDLADIAVHSMKDVPVDFPEGLGLEVICEREDPRDAFVSNLYKSISELPLGATVGTSSLRRQCQIRASRPDLIIKDLRGNVGTRLAKLDNGEYDAIILAAAGLIRLKLSERIASFISAEESLPANGQGAVGIECRINDERVKALLAPLEHLETRYRVLAERAMNTRLEGGCQVPIGAFAEIDGDEMTLRGLVGNPDGSEIIEGVITGPKTEATQLGVALAEELLSKGAKSILDAVYAKA</sequence>
<feature type="chain" id="PRO_1000125679" description="Porphobilinogen deaminase">
    <location>
        <begin position="1"/>
        <end position="310"/>
    </location>
</feature>
<feature type="modified residue" description="S-(dipyrrolylmethanemethyl)cysteine" evidence="1">
    <location>
        <position position="242"/>
    </location>
</feature>
<organism>
    <name type="scientific">Shewanella baltica (strain OS223)</name>
    <dbReference type="NCBI Taxonomy" id="407976"/>
    <lineage>
        <taxon>Bacteria</taxon>
        <taxon>Pseudomonadati</taxon>
        <taxon>Pseudomonadota</taxon>
        <taxon>Gammaproteobacteria</taxon>
        <taxon>Alteromonadales</taxon>
        <taxon>Shewanellaceae</taxon>
        <taxon>Shewanella</taxon>
    </lineage>
</organism>
<evidence type="ECO:0000255" key="1">
    <source>
        <dbReference type="HAMAP-Rule" id="MF_00260"/>
    </source>
</evidence>
<proteinExistence type="inferred from homology"/>
<protein>
    <recommendedName>
        <fullName evidence="1">Porphobilinogen deaminase</fullName>
        <shortName evidence="1">PBG</shortName>
        <ecNumber evidence="1">2.5.1.61</ecNumber>
    </recommendedName>
    <alternativeName>
        <fullName evidence="1">Hydroxymethylbilane synthase</fullName>
        <shortName evidence="1">HMBS</shortName>
    </alternativeName>
    <alternativeName>
        <fullName evidence="1">Pre-uroporphyrinogen synthase</fullName>
    </alternativeName>
</protein>
<gene>
    <name evidence="1" type="primary">hemC</name>
    <name type="ordered locus">Sbal223_3901</name>
</gene>